<name>PDRP_CLOD6</name>
<keyword id="KW-0418">Kinase</keyword>
<keyword id="KW-0547">Nucleotide-binding</keyword>
<keyword id="KW-1185">Reference proteome</keyword>
<keyword id="KW-0723">Serine/threonine-protein kinase</keyword>
<keyword id="KW-0808">Transferase</keyword>
<accession>Q181Z6</accession>
<feature type="chain" id="PRO_0000316663" description="Putative pyruvate, phosphate dikinase regulatory protein">
    <location>
        <begin position="1"/>
        <end position="280"/>
    </location>
</feature>
<feature type="binding site" evidence="1">
    <location>
        <begin position="152"/>
        <end position="159"/>
    </location>
    <ligand>
        <name>ADP</name>
        <dbReference type="ChEBI" id="CHEBI:456216"/>
    </ligand>
</feature>
<evidence type="ECO:0000255" key="1">
    <source>
        <dbReference type="HAMAP-Rule" id="MF_00921"/>
    </source>
</evidence>
<organism>
    <name type="scientific">Clostridioides difficile (strain 630)</name>
    <name type="common">Peptoclostridium difficile</name>
    <dbReference type="NCBI Taxonomy" id="272563"/>
    <lineage>
        <taxon>Bacteria</taxon>
        <taxon>Bacillati</taxon>
        <taxon>Bacillota</taxon>
        <taxon>Clostridia</taxon>
        <taxon>Peptostreptococcales</taxon>
        <taxon>Peptostreptococcaceae</taxon>
        <taxon>Clostridioides</taxon>
    </lineage>
</organism>
<protein>
    <recommendedName>
        <fullName evidence="1">Putative pyruvate, phosphate dikinase regulatory protein</fullName>
        <shortName evidence="1">PPDK regulatory protein</shortName>
        <ecNumber evidence="1">2.7.11.32</ecNumber>
        <ecNumber evidence="1">2.7.4.27</ecNumber>
    </recommendedName>
</protein>
<reference key="1">
    <citation type="journal article" date="2006" name="Nat. Genet.">
        <title>The multidrug-resistant human pathogen Clostridium difficile has a highly mobile, mosaic genome.</title>
        <authorList>
            <person name="Sebaihia M."/>
            <person name="Wren B.W."/>
            <person name="Mullany P."/>
            <person name="Fairweather N.F."/>
            <person name="Minton N."/>
            <person name="Stabler R."/>
            <person name="Thomson N.R."/>
            <person name="Roberts A.P."/>
            <person name="Cerdeno-Tarraga A.M."/>
            <person name="Wang H."/>
            <person name="Holden M.T.G."/>
            <person name="Wright A."/>
            <person name="Churcher C."/>
            <person name="Quail M.A."/>
            <person name="Baker S."/>
            <person name="Bason N."/>
            <person name="Brooks K."/>
            <person name="Chillingworth T."/>
            <person name="Cronin A."/>
            <person name="Davis P."/>
            <person name="Dowd L."/>
            <person name="Fraser A."/>
            <person name="Feltwell T."/>
            <person name="Hance Z."/>
            <person name="Holroyd S."/>
            <person name="Jagels K."/>
            <person name="Moule S."/>
            <person name="Mungall K."/>
            <person name="Price C."/>
            <person name="Rabbinowitsch E."/>
            <person name="Sharp S."/>
            <person name="Simmonds M."/>
            <person name="Stevens K."/>
            <person name="Unwin L."/>
            <person name="Whithead S."/>
            <person name="Dupuy B."/>
            <person name="Dougan G."/>
            <person name="Barrell B."/>
            <person name="Parkhill J."/>
        </authorList>
    </citation>
    <scope>NUCLEOTIDE SEQUENCE [LARGE SCALE GENOMIC DNA]</scope>
    <source>
        <strain>630</strain>
    </source>
</reference>
<dbReference type="EC" id="2.7.11.32" evidence="1"/>
<dbReference type="EC" id="2.7.4.27" evidence="1"/>
<dbReference type="EMBL" id="AM180355">
    <property type="protein sequence ID" value="CAJ69296.1"/>
    <property type="molecule type" value="Genomic_DNA"/>
</dbReference>
<dbReference type="RefSeq" id="WP_004454708.1">
    <property type="nucleotide sequence ID" value="NZ_JAUPES010000003.1"/>
</dbReference>
<dbReference type="RefSeq" id="YP_001088923.1">
    <property type="nucleotide sequence ID" value="NC_009089.1"/>
</dbReference>
<dbReference type="SMR" id="Q181Z6"/>
<dbReference type="STRING" id="272563.CD630_24110"/>
<dbReference type="EnsemblBacteria" id="CAJ69296">
    <property type="protein sequence ID" value="CAJ69296"/>
    <property type="gene ID" value="CD630_24110"/>
</dbReference>
<dbReference type="KEGG" id="cdf:CD630_24110"/>
<dbReference type="PATRIC" id="fig|272563.8.peg.2529"/>
<dbReference type="eggNOG" id="COG1806">
    <property type="taxonomic scope" value="Bacteria"/>
</dbReference>
<dbReference type="OrthoDB" id="9782201at2"/>
<dbReference type="PhylomeDB" id="Q181Z6"/>
<dbReference type="BioCyc" id="PDIF272563:G12WB-2562-MONOMER"/>
<dbReference type="Proteomes" id="UP000001978">
    <property type="component" value="Chromosome"/>
</dbReference>
<dbReference type="GO" id="GO:0043531">
    <property type="term" value="F:ADP binding"/>
    <property type="evidence" value="ECO:0007669"/>
    <property type="project" value="UniProtKB-UniRule"/>
</dbReference>
<dbReference type="GO" id="GO:0005524">
    <property type="term" value="F:ATP binding"/>
    <property type="evidence" value="ECO:0007669"/>
    <property type="project" value="InterPro"/>
</dbReference>
<dbReference type="GO" id="GO:0016776">
    <property type="term" value="F:phosphotransferase activity, phosphate group as acceptor"/>
    <property type="evidence" value="ECO:0007669"/>
    <property type="project" value="UniProtKB-UniRule"/>
</dbReference>
<dbReference type="GO" id="GO:0004674">
    <property type="term" value="F:protein serine/threonine kinase activity"/>
    <property type="evidence" value="ECO:0007669"/>
    <property type="project" value="UniProtKB-UniRule"/>
</dbReference>
<dbReference type="HAMAP" id="MF_00921">
    <property type="entry name" value="PDRP"/>
    <property type="match status" value="1"/>
</dbReference>
<dbReference type="InterPro" id="IPR005177">
    <property type="entry name" value="Kinase-pyrophosphorylase"/>
</dbReference>
<dbReference type="InterPro" id="IPR026565">
    <property type="entry name" value="PPDK_reg"/>
</dbReference>
<dbReference type="NCBIfam" id="NF003742">
    <property type="entry name" value="PRK05339.1"/>
    <property type="match status" value="1"/>
</dbReference>
<dbReference type="PANTHER" id="PTHR31756">
    <property type="entry name" value="PYRUVATE, PHOSPHATE DIKINASE REGULATORY PROTEIN 1, CHLOROPLASTIC"/>
    <property type="match status" value="1"/>
</dbReference>
<dbReference type="PANTHER" id="PTHR31756:SF3">
    <property type="entry name" value="PYRUVATE, PHOSPHATE DIKINASE REGULATORY PROTEIN 1, CHLOROPLASTIC"/>
    <property type="match status" value="1"/>
</dbReference>
<dbReference type="Pfam" id="PF03618">
    <property type="entry name" value="Kinase-PPPase"/>
    <property type="match status" value="1"/>
</dbReference>
<sequence length="280" mass="31741">MLVKNLIIYAVSDSVGETAQQVAKACMSQFYVNETYEIKRFPYMINKGVLLETLENAKAENALIVYTLVDEELCSIVERYCEREGLSCIDLMTDILREISKRTGRKPKREAGIIRKLDESYFKRVEAIEFAVKYDDGKDPRGVLQADIILVGISRTSKTPLSMYLANKNIKVANVPLVPEIPIPKEVFEIDTKKIIGLTNSPEKLNEIRTQRLKALGLSSKANYANLERILQELDYSEEIMKRIGCPVINVSNKAIEETAGIILDIMKENGLKIYKEIEI</sequence>
<proteinExistence type="inferred from homology"/>
<gene>
    <name type="ordered locus">CD630_24110</name>
</gene>
<comment type="function">
    <text evidence="1">Bifunctional serine/threonine kinase and phosphorylase involved in the regulation of the pyruvate, phosphate dikinase (PPDK) by catalyzing its phosphorylation/dephosphorylation.</text>
</comment>
<comment type="catalytic activity">
    <reaction evidence="1">
        <text>N(tele)-phospho-L-histidyl/L-threonyl-[pyruvate, phosphate dikinase] + ADP = N(tele)-phospho-L-histidyl/O-phospho-L-threonyl-[pyruvate, phosphate dikinase] + AMP + H(+)</text>
        <dbReference type="Rhea" id="RHEA:43692"/>
        <dbReference type="Rhea" id="RHEA-COMP:10650"/>
        <dbReference type="Rhea" id="RHEA-COMP:10651"/>
        <dbReference type="ChEBI" id="CHEBI:15378"/>
        <dbReference type="ChEBI" id="CHEBI:30013"/>
        <dbReference type="ChEBI" id="CHEBI:61977"/>
        <dbReference type="ChEBI" id="CHEBI:83586"/>
        <dbReference type="ChEBI" id="CHEBI:456215"/>
        <dbReference type="ChEBI" id="CHEBI:456216"/>
        <dbReference type="EC" id="2.7.11.32"/>
    </reaction>
</comment>
<comment type="catalytic activity">
    <reaction evidence="1">
        <text>N(tele)-phospho-L-histidyl/O-phospho-L-threonyl-[pyruvate, phosphate dikinase] + phosphate + H(+) = N(tele)-phospho-L-histidyl/L-threonyl-[pyruvate, phosphate dikinase] + diphosphate</text>
        <dbReference type="Rhea" id="RHEA:43696"/>
        <dbReference type="Rhea" id="RHEA-COMP:10650"/>
        <dbReference type="Rhea" id="RHEA-COMP:10651"/>
        <dbReference type="ChEBI" id="CHEBI:15378"/>
        <dbReference type="ChEBI" id="CHEBI:30013"/>
        <dbReference type="ChEBI" id="CHEBI:33019"/>
        <dbReference type="ChEBI" id="CHEBI:43474"/>
        <dbReference type="ChEBI" id="CHEBI:61977"/>
        <dbReference type="ChEBI" id="CHEBI:83586"/>
        <dbReference type="EC" id="2.7.4.27"/>
    </reaction>
</comment>
<comment type="similarity">
    <text evidence="1">Belongs to the pyruvate, phosphate/water dikinase regulatory protein family. PDRP subfamily.</text>
</comment>